<keyword id="KW-0414">Isoprene biosynthesis</keyword>
<keyword id="KW-0460">Magnesium</keyword>
<keyword id="KW-0479">Metal-binding</keyword>
<keyword id="KW-1185">Reference proteome</keyword>
<keyword id="KW-0784">Thiamine biosynthesis</keyword>
<keyword id="KW-0786">Thiamine pyrophosphate</keyword>
<keyword id="KW-0808">Transferase</keyword>
<sequence length="647" mass="70697">MTQILSRISNPGDLQRLSATELDQLAKEIREVIIQTTSKNGGHLAPNLGVVELTLALHLVFQSPKDKIIWDVGHQSYVHKLLTGRYNHFHTLRRYKGMAGFPKRSESEHDVFNTGHSSTSISAALGFAFARDLKKEDGAVIAVIGDGALTGGIALEALNHAGHAGNDMIVVLNDNEKSIADNVGAMSTYLSRIRTDPRYFRNKEEVEEIVRRIPSIGNHVLKVMEKMKDSFKHLVVPGILFEELGFSYLGPIDGHNLSQLREVMTNACRLKGPILVHVLTKKGKGYGPAETNPSVFHGVGPFDVETGKVKKHLGPPTYTQVFSDTLLRLAREDERIVGVTAAMPDGTGMTPFARAFPSRFFDVGIAEQHAVNMSAALALQGLKPVVAIYSTFLQRAYDQVFHDVCLQRAPVVFAIDRGGIVGDDGETHHGLFDIAFLRHIPELVMMAPKDENELQHMLRTALEYEGPIAVRYPRGTGVGVTLDEELTTVPIGRGELLRQGSDVTIVAIGAMVGIAEEAADLLEAEGIRAAVVNARFVKPLDKELIIKQARETGRIVTVEEHVLAGGFGSAILELLEMEGVHCAVRRIGIPDEYVQHGSVSVLREDYGLTASNVARVARELADADRSRASIRMAPPAPIKIAFRGESR</sequence>
<proteinExistence type="inferred from homology"/>
<organism>
    <name type="scientific">Heliobacterium modesticaldum (strain ATCC 51547 / Ice1)</name>
    <dbReference type="NCBI Taxonomy" id="498761"/>
    <lineage>
        <taxon>Bacteria</taxon>
        <taxon>Bacillati</taxon>
        <taxon>Bacillota</taxon>
        <taxon>Clostridia</taxon>
        <taxon>Eubacteriales</taxon>
        <taxon>Heliobacteriaceae</taxon>
        <taxon>Heliomicrobium</taxon>
    </lineage>
</organism>
<gene>
    <name evidence="1" type="primary">dxs</name>
    <name type="ordered locus">Helmi_04700</name>
    <name type="ORF">HM1_0295</name>
</gene>
<accession>B0TEJ5</accession>
<evidence type="ECO:0000255" key="1">
    <source>
        <dbReference type="HAMAP-Rule" id="MF_00315"/>
    </source>
</evidence>
<feature type="chain" id="PRO_1000115745" description="1-deoxy-D-xylulose-5-phosphate synthase">
    <location>
        <begin position="1"/>
        <end position="647"/>
    </location>
</feature>
<feature type="binding site" evidence="1">
    <location>
        <position position="74"/>
    </location>
    <ligand>
        <name>thiamine diphosphate</name>
        <dbReference type="ChEBI" id="CHEBI:58937"/>
    </ligand>
</feature>
<feature type="binding site" evidence="1">
    <location>
        <begin position="115"/>
        <end position="117"/>
    </location>
    <ligand>
        <name>thiamine diphosphate</name>
        <dbReference type="ChEBI" id="CHEBI:58937"/>
    </ligand>
</feature>
<feature type="binding site" evidence="1">
    <location>
        <position position="146"/>
    </location>
    <ligand>
        <name>Mg(2+)</name>
        <dbReference type="ChEBI" id="CHEBI:18420"/>
    </ligand>
</feature>
<feature type="binding site" evidence="1">
    <location>
        <begin position="147"/>
        <end position="148"/>
    </location>
    <ligand>
        <name>thiamine diphosphate</name>
        <dbReference type="ChEBI" id="CHEBI:58937"/>
    </ligand>
</feature>
<feature type="binding site" evidence="1">
    <location>
        <position position="175"/>
    </location>
    <ligand>
        <name>Mg(2+)</name>
        <dbReference type="ChEBI" id="CHEBI:18420"/>
    </ligand>
</feature>
<feature type="binding site" evidence="1">
    <location>
        <position position="175"/>
    </location>
    <ligand>
        <name>thiamine diphosphate</name>
        <dbReference type="ChEBI" id="CHEBI:58937"/>
    </ligand>
</feature>
<feature type="binding site" evidence="1">
    <location>
        <position position="286"/>
    </location>
    <ligand>
        <name>thiamine diphosphate</name>
        <dbReference type="ChEBI" id="CHEBI:58937"/>
    </ligand>
</feature>
<feature type="binding site" evidence="1">
    <location>
        <position position="367"/>
    </location>
    <ligand>
        <name>thiamine diphosphate</name>
        <dbReference type="ChEBI" id="CHEBI:58937"/>
    </ligand>
</feature>
<name>DXS_HELMI</name>
<dbReference type="EC" id="2.2.1.7" evidence="1"/>
<dbReference type="EMBL" id="CP000930">
    <property type="protein sequence ID" value="ABZ82914.1"/>
    <property type="molecule type" value="Genomic_DNA"/>
</dbReference>
<dbReference type="RefSeq" id="WP_012281638.1">
    <property type="nucleotide sequence ID" value="NC_010337.2"/>
</dbReference>
<dbReference type="SMR" id="B0TEJ5"/>
<dbReference type="STRING" id="498761.HM1_0295"/>
<dbReference type="KEGG" id="hmo:HM1_0295"/>
<dbReference type="eggNOG" id="COG1154">
    <property type="taxonomic scope" value="Bacteria"/>
</dbReference>
<dbReference type="HOGENOM" id="CLU_009227_1_4_9"/>
<dbReference type="OrthoDB" id="9803371at2"/>
<dbReference type="UniPathway" id="UPA00064">
    <property type="reaction ID" value="UER00091"/>
</dbReference>
<dbReference type="Proteomes" id="UP000008550">
    <property type="component" value="Chromosome"/>
</dbReference>
<dbReference type="GO" id="GO:0005829">
    <property type="term" value="C:cytosol"/>
    <property type="evidence" value="ECO:0007669"/>
    <property type="project" value="TreeGrafter"/>
</dbReference>
<dbReference type="GO" id="GO:0008661">
    <property type="term" value="F:1-deoxy-D-xylulose-5-phosphate synthase activity"/>
    <property type="evidence" value="ECO:0007669"/>
    <property type="project" value="UniProtKB-UniRule"/>
</dbReference>
<dbReference type="GO" id="GO:0000287">
    <property type="term" value="F:magnesium ion binding"/>
    <property type="evidence" value="ECO:0007669"/>
    <property type="project" value="UniProtKB-UniRule"/>
</dbReference>
<dbReference type="GO" id="GO:0030976">
    <property type="term" value="F:thiamine pyrophosphate binding"/>
    <property type="evidence" value="ECO:0007669"/>
    <property type="project" value="UniProtKB-UniRule"/>
</dbReference>
<dbReference type="GO" id="GO:0052865">
    <property type="term" value="P:1-deoxy-D-xylulose 5-phosphate biosynthetic process"/>
    <property type="evidence" value="ECO:0007669"/>
    <property type="project" value="UniProtKB-UniPathway"/>
</dbReference>
<dbReference type="GO" id="GO:0019288">
    <property type="term" value="P:isopentenyl diphosphate biosynthetic process, methylerythritol 4-phosphate pathway"/>
    <property type="evidence" value="ECO:0007669"/>
    <property type="project" value="TreeGrafter"/>
</dbReference>
<dbReference type="GO" id="GO:0016114">
    <property type="term" value="P:terpenoid biosynthetic process"/>
    <property type="evidence" value="ECO:0007669"/>
    <property type="project" value="UniProtKB-UniRule"/>
</dbReference>
<dbReference type="GO" id="GO:0009228">
    <property type="term" value="P:thiamine biosynthetic process"/>
    <property type="evidence" value="ECO:0007669"/>
    <property type="project" value="UniProtKB-UniRule"/>
</dbReference>
<dbReference type="CDD" id="cd02007">
    <property type="entry name" value="TPP_DXS"/>
    <property type="match status" value="1"/>
</dbReference>
<dbReference type="CDD" id="cd07033">
    <property type="entry name" value="TPP_PYR_DXS_TK_like"/>
    <property type="match status" value="1"/>
</dbReference>
<dbReference type="FunFam" id="3.40.50.920:FF:000002">
    <property type="entry name" value="1-deoxy-D-xylulose-5-phosphate synthase"/>
    <property type="match status" value="1"/>
</dbReference>
<dbReference type="FunFam" id="3.40.50.970:FF:000005">
    <property type="entry name" value="1-deoxy-D-xylulose-5-phosphate synthase"/>
    <property type="match status" value="1"/>
</dbReference>
<dbReference type="Gene3D" id="3.40.50.920">
    <property type="match status" value="1"/>
</dbReference>
<dbReference type="Gene3D" id="3.40.50.970">
    <property type="match status" value="2"/>
</dbReference>
<dbReference type="HAMAP" id="MF_00315">
    <property type="entry name" value="DXP_synth"/>
    <property type="match status" value="1"/>
</dbReference>
<dbReference type="InterPro" id="IPR005477">
    <property type="entry name" value="Dxylulose-5-P_synthase"/>
</dbReference>
<dbReference type="InterPro" id="IPR029061">
    <property type="entry name" value="THDP-binding"/>
</dbReference>
<dbReference type="InterPro" id="IPR009014">
    <property type="entry name" value="Transketo_C/PFOR_II"/>
</dbReference>
<dbReference type="InterPro" id="IPR005475">
    <property type="entry name" value="Transketolase-like_Pyr-bd"/>
</dbReference>
<dbReference type="InterPro" id="IPR020826">
    <property type="entry name" value="Transketolase_BS"/>
</dbReference>
<dbReference type="InterPro" id="IPR033248">
    <property type="entry name" value="Transketolase_C"/>
</dbReference>
<dbReference type="InterPro" id="IPR049557">
    <property type="entry name" value="Transketolase_CS"/>
</dbReference>
<dbReference type="NCBIfam" id="TIGR00204">
    <property type="entry name" value="dxs"/>
    <property type="match status" value="1"/>
</dbReference>
<dbReference type="NCBIfam" id="NF003933">
    <property type="entry name" value="PRK05444.2-2"/>
    <property type="match status" value="1"/>
</dbReference>
<dbReference type="PANTHER" id="PTHR43322">
    <property type="entry name" value="1-D-DEOXYXYLULOSE 5-PHOSPHATE SYNTHASE-RELATED"/>
    <property type="match status" value="1"/>
</dbReference>
<dbReference type="PANTHER" id="PTHR43322:SF5">
    <property type="entry name" value="1-DEOXY-D-XYLULOSE-5-PHOSPHATE SYNTHASE, CHLOROPLASTIC"/>
    <property type="match status" value="1"/>
</dbReference>
<dbReference type="Pfam" id="PF13292">
    <property type="entry name" value="DXP_synthase_N"/>
    <property type="match status" value="1"/>
</dbReference>
<dbReference type="Pfam" id="PF02779">
    <property type="entry name" value="Transket_pyr"/>
    <property type="match status" value="1"/>
</dbReference>
<dbReference type="Pfam" id="PF02780">
    <property type="entry name" value="Transketolase_C"/>
    <property type="match status" value="1"/>
</dbReference>
<dbReference type="SMART" id="SM00861">
    <property type="entry name" value="Transket_pyr"/>
    <property type="match status" value="1"/>
</dbReference>
<dbReference type="SUPFAM" id="SSF52518">
    <property type="entry name" value="Thiamin diphosphate-binding fold (THDP-binding)"/>
    <property type="match status" value="2"/>
</dbReference>
<dbReference type="SUPFAM" id="SSF52922">
    <property type="entry name" value="TK C-terminal domain-like"/>
    <property type="match status" value="1"/>
</dbReference>
<dbReference type="PROSITE" id="PS00801">
    <property type="entry name" value="TRANSKETOLASE_1"/>
    <property type="match status" value="1"/>
</dbReference>
<dbReference type="PROSITE" id="PS00802">
    <property type="entry name" value="TRANSKETOLASE_2"/>
    <property type="match status" value="1"/>
</dbReference>
<protein>
    <recommendedName>
        <fullName evidence="1">1-deoxy-D-xylulose-5-phosphate synthase</fullName>
        <ecNumber evidence="1">2.2.1.7</ecNumber>
    </recommendedName>
    <alternativeName>
        <fullName evidence="1">1-deoxyxylulose-5-phosphate synthase</fullName>
        <shortName evidence="1">DXP synthase</shortName>
        <shortName evidence="1">DXPS</shortName>
    </alternativeName>
</protein>
<comment type="function">
    <text evidence="1">Catalyzes the acyloin condensation reaction between C atoms 2 and 3 of pyruvate and glyceraldehyde 3-phosphate to yield 1-deoxy-D-xylulose-5-phosphate (DXP).</text>
</comment>
<comment type="catalytic activity">
    <reaction evidence="1">
        <text>D-glyceraldehyde 3-phosphate + pyruvate + H(+) = 1-deoxy-D-xylulose 5-phosphate + CO2</text>
        <dbReference type="Rhea" id="RHEA:12605"/>
        <dbReference type="ChEBI" id="CHEBI:15361"/>
        <dbReference type="ChEBI" id="CHEBI:15378"/>
        <dbReference type="ChEBI" id="CHEBI:16526"/>
        <dbReference type="ChEBI" id="CHEBI:57792"/>
        <dbReference type="ChEBI" id="CHEBI:59776"/>
        <dbReference type="EC" id="2.2.1.7"/>
    </reaction>
</comment>
<comment type="cofactor">
    <cofactor evidence="1">
        <name>Mg(2+)</name>
        <dbReference type="ChEBI" id="CHEBI:18420"/>
    </cofactor>
    <text evidence="1">Binds 1 Mg(2+) ion per subunit.</text>
</comment>
<comment type="cofactor">
    <cofactor evidence="1">
        <name>thiamine diphosphate</name>
        <dbReference type="ChEBI" id="CHEBI:58937"/>
    </cofactor>
    <text evidence="1">Binds 1 thiamine pyrophosphate per subunit.</text>
</comment>
<comment type="pathway">
    <text evidence="1">Metabolic intermediate biosynthesis; 1-deoxy-D-xylulose 5-phosphate biosynthesis; 1-deoxy-D-xylulose 5-phosphate from D-glyceraldehyde 3-phosphate and pyruvate: step 1/1.</text>
</comment>
<comment type="subunit">
    <text evidence="1">Homodimer.</text>
</comment>
<comment type="similarity">
    <text evidence="1">Belongs to the transketolase family. DXPS subfamily.</text>
</comment>
<reference key="1">
    <citation type="journal article" date="2008" name="J. Bacteriol.">
        <title>The genome of Heliobacterium modesticaldum, a phototrophic representative of the Firmicutes containing the simplest photosynthetic apparatus.</title>
        <authorList>
            <person name="Sattley W.M."/>
            <person name="Madigan M.T."/>
            <person name="Swingley W.D."/>
            <person name="Cheung P.C."/>
            <person name="Clocksin K.M."/>
            <person name="Conrad A.L."/>
            <person name="Dejesa L.C."/>
            <person name="Honchak B.M."/>
            <person name="Jung D.O."/>
            <person name="Karbach L.E."/>
            <person name="Kurdoglu A."/>
            <person name="Lahiri S."/>
            <person name="Mastrian S.D."/>
            <person name="Page L.E."/>
            <person name="Taylor H.L."/>
            <person name="Wang Z.T."/>
            <person name="Raymond J."/>
            <person name="Chen M."/>
            <person name="Blankenship R.E."/>
            <person name="Touchman J.W."/>
        </authorList>
    </citation>
    <scope>NUCLEOTIDE SEQUENCE [LARGE SCALE GENOMIC DNA]</scope>
    <source>
        <strain>ATCC 51547 / Ice1</strain>
    </source>
</reference>